<evidence type="ECO:0000255" key="1">
    <source>
        <dbReference type="HAMAP-Rule" id="MF_00570"/>
    </source>
</evidence>
<comment type="function">
    <text evidence="1">Catalyzes the synthesis of beta-nicotinate D-ribonucleotide from nicotinate and 5-phospho-D-ribose 1-phosphate at the expense of ATP.</text>
</comment>
<comment type="catalytic activity">
    <reaction evidence="1">
        <text>nicotinate + 5-phospho-alpha-D-ribose 1-diphosphate + ATP + H2O = nicotinate beta-D-ribonucleotide + ADP + phosphate + diphosphate</text>
        <dbReference type="Rhea" id="RHEA:36163"/>
        <dbReference type="ChEBI" id="CHEBI:15377"/>
        <dbReference type="ChEBI" id="CHEBI:30616"/>
        <dbReference type="ChEBI" id="CHEBI:32544"/>
        <dbReference type="ChEBI" id="CHEBI:33019"/>
        <dbReference type="ChEBI" id="CHEBI:43474"/>
        <dbReference type="ChEBI" id="CHEBI:57502"/>
        <dbReference type="ChEBI" id="CHEBI:58017"/>
        <dbReference type="ChEBI" id="CHEBI:456216"/>
        <dbReference type="EC" id="6.3.4.21"/>
    </reaction>
</comment>
<comment type="pathway">
    <text evidence="1">Cofactor biosynthesis; NAD(+) biosynthesis; nicotinate D-ribonucleotide from nicotinate: step 1/1.</text>
</comment>
<comment type="PTM">
    <text evidence="1">Transiently phosphorylated on a His residue during the reaction cycle. Phosphorylation strongly increases the affinity for substrates and increases the rate of nicotinate D-ribonucleotide production. Dephosphorylation regenerates the low-affinity form of the enzyme, leading to product release.</text>
</comment>
<comment type="similarity">
    <text evidence="1">Belongs to the NAPRTase family.</text>
</comment>
<sequence>MTQFASPVLHSLLDTDAYKLHMQQAVFHHYYDVHVAAEFRCRGDDLLGIYADAIREQIQAMQHLRLQDDEYQWLSALPFFKADYLNWLREFRFNPEQVTVSNDNGKLDIRLSGPWREVILWEVPLLAVISEMVHRYRSPQADVAQALDTLESKLVDFSALTAGLDMSRFHLMDFGTRRRFSREVQETIVKRLQQESWFVGTSNYDLARRLSLTPMGTQAHEWFQAHQQISPDLANSQRAALAAWLEEYPDQLGIALTDCITMDAFLRDFGVEFASRYQGLRHDSGDPVEWGEKAIAHYEKLGIDPQSKTLVFSDNLDLRKAVELYRHFSSRVQLSFGIGTRLTCDIPQVKPLNIVIKLVECNGKPVAKLSDSPGKTICHDKAFVRALRKAFDLPHIKKAS</sequence>
<name>PNCB_SHISS</name>
<organism>
    <name type="scientific">Shigella sonnei (strain Ss046)</name>
    <dbReference type="NCBI Taxonomy" id="300269"/>
    <lineage>
        <taxon>Bacteria</taxon>
        <taxon>Pseudomonadati</taxon>
        <taxon>Pseudomonadota</taxon>
        <taxon>Gammaproteobacteria</taxon>
        <taxon>Enterobacterales</taxon>
        <taxon>Enterobacteriaceae</taxon>
        <taxon>Shigella</taxon>
    </lineage>
</organism>
<reference key="1">
    <citation type="journal article" date="2005" name="Nucleic Acids Res.">
        <title>Genome dynamics and diversity of Shigella species, the etiologic agents of bacillary dysentery.</title>
        <authorList>
            <person name="Yang F."/>
            <person name="Yang J."/>
            <person name="Zhang X."/>
            <person name="Chen L."/>
            <person name="Jiang Y."/>
            <person name="Yan Y."/>
            <person name="Tang X."/>
            <person name="Wang J."/>
            <person name="Xiong Z."/>
            <person name="Dong J."/>
            <person name="Xue Y."/>
            <person name="Zhu Y."/>
            <person name="Xu X."/>
            <person name="Sun L."/>
            <person name="Chen S."/>
            <person name="Nie H."/>
            <person name="Peng J."/>
            <person name="Xu J."/>
            <person name="Wang Y."/>
            <person name="Yuan Z."/>
            <person name="Wen Y."/>
            <person name="Yao Z."/>
            <person name="Shen Y."/>
            <person name="Qiang B."/>
            <person name="Hou Y."/>
            <person name="Yu J."/>
            <person name="Jin Q."/>
        </authorList>
    </citation>
    <scope>NUCLEOTIDE SEQUENCE [LARGE SCALE GENOMIC DNA]</scope>
    <source>
        <strain>Ss046</strain>
    </source>
</reference>
<proteinExistence type="inferred from homology"/>
<protein>
    <recommendedName>
        <fullName evidence="1">Nicotinate phosphoribosyltransferase</fullName>
        <shortName evidence="1">NAPRTase</shortName>
        <ecNumber evidence="1">6.3.4.21</ecNumber>
    </recommendedName>
</protein>
<gene>
    <name evidence="1" type="primary">pncB</name>
    <name type="ordered locus">SSON_0934</name>
</gene>
<dbReference type="EC" id="6.3.4.21" evidence="1"/>
<dbReference type="EMBL" id="CP000038">
    <property type="protein sequence ID" value="AAZ87673.1"/>
    <property type="molecule type" value="Genomic_DNA"/>
</dbReference>
<dbReference type="RefSeq" id="WP_001297200.1">
    <property type="nucleotide sequence ID" value="NC_007384.1"/>
</dbReference>
<dbReference type="SMR" id="Q3Z3I9"/>
<dbReference type="GeneID" id="93776483"/>
<dbReference type="KEGG" id="ssn:SSON_0934"/>
<dbReference type="HOGENOM" id="CLU_030991_1_0_6"/>
<dbReference type="UniPathway" id="UPA00253">
    <property type="reaction ID" value="UER00457"/>
</dbReference>
<dbReference type="Proteomes" id="UP000002529">
    <property type="component" value="Chromosome"/>
</dbReference>
<dbReference type="GO" id="GO:0005829">
    <property type="term" value="C:cytosol"/>
    <property type="evidence" value="ECO:0007669"/>
    <property type="project" value="TreeGrafter"/>
</dbReference>
<dbReference type="GO" id="GO:0004516">
    <property type="term" value="F:nicotinate phosphoribosyltransferase activity"/>
    <property type="evidence" value="ECO:0007669"/>
    <property type="project" value="UniProtKB-UniRule"/>
</dbReference>
<dbReference type="GO" id="GO:0034355">
    <property type="term" value="P:NAD biosynthetic process via the salvage pathway"/>
    <property type="evidence" value="ECO:0007669"/>
    <property type="project" value="TreeGrafter"/>
</dbReference>
<dbReference type="CDD" id="cd01401">
    <property type="entry name" value="PncB_like"/>
    <property type="match status" value="1"/>
</dbReference>
<dbReference type="FunFam" id="3.20.140.10:FF:000001">
    <property type="entry name" value="Nicotinate phosphoribosyltransferase"/>
    <property type="match status" value="1"/>
</dbReference>
<dbReference type="Gene3D" id="3.20.140.10">
    <property type="entry name" value="nicotinate phosphoribosyltransferase"/>
    <property type="match status" value="1"/>
</dbReference>
<dbReference type="HAMAP" id="MF_00570">
    <property type="entry name" value="NAPRTase"/>
    <property type="match status" value="1"/>
</dbReference>
<dbReference type="InterPro" id="IPR041525">
    <property type="entry name" value="N/Namide_PRibTrfase"/>
</dbReference>
<dbReference type="InterPro" id="IPR040727">
    <property type="entry name" value="NAPRTase_N"/>
</dbReference>
<dbReference type="InterPro" id="IPR006406">
    <property type="entry name" value="Nic_PRibTrfase"/>
</dbReference>
<dbReference type="InterPro" id="IPR007229">
    <property type="entry name" value="Nic_PRibTrfase-Fam"/>
</dbReference>
<dbReference type="InterPro" id="IPR036068">
    <property type="entry name" value="Nicotinate_pribotase-like_C"/>
</dbReference>
<dbReference type="NCBIfam" id="TIGR01514">
    <property type="entry name" value="NAPRTase"/>
    <property type="match status" value="1"/>
</dbReference>
<dbReference type="NCBIfam" id="NF003704">
    <property type="entry name" value="PRK05321.1"/>
    <property type="match status" value="1"/>
</dbReference>
<dbReference type="PANTHER" id="PTHR11098">
    <property type="entry name" value="NICOTINATE PHOSPHORIBOSYLTRANSFERASE"/>
    <property type="match status" value="1"/>
</dbReference>
<dbReference type="PANTHER" id="PTHR11098:SF1">
    <property type="entry name" value="NICOTINATE PHOSPHORIBOSYLTRANSFERASE"/>
    <property type="match status" value="1"/>
</dbReference>
<dbReference type="Pfam" id="PF04095">
    <property type="entry name" value="NAPRTase"/>
    <property type="match status" value="1"/>
</dbReference>
<dbReference type="Pfam" id="PF17767">
    <property type="entry name" value="NAPRTase_N"/>
    <property type="match status" value="1"/>
</dbReference>
<dbReference type="PIRSF" id="PIRSF000484">
    <property type="entry name" value="NAPRT"/>
    <property type="match status" value="1"/>
</dbReference>
<dbReference type="SUPFAM" id="SSF51690">
    <property type="entry name" value="Nicotinate/Quinolinate PRTase C-terminal domain-like"/>
    <property type="match status" value="1"/>
</dbReference>
<dbReference type="SUPFAM" id="SSF54675">
    <property type="entry name" value="Nicotinate/Quinolinate PRTase N-terminal domain-like"/>
    <property type="match status" value="1"/>
</dbReference>
<keyword id="KW-0436">Ligase</keyword>
<keyword id="KW-0597">Phosphoprotein</keyword>
<keyword id="KW-0662">Pyridine nucleotide biosynthesis</keyword>
<keyword id="KW-1185">Reference proteome</keyword>
<accession>Q3Z3I9</accession>
<feature type="chain" id="PRO_1000025014" description="Nicotinate phosphoribosyltransferase">
    <location>
        <begin position="1"/>
        <end position="400"/>
    </location>
</feature>
<feature type="modified residue" description="Phosphohistidine; by autocatalysis" evidence="1">
    <location>
        <position position="220"/>
    </location>
</feature>